<organism>
    <name type="scientific">Sinorhizobium fredii (strain NBRC 101917 / NGR234)</name>
    <dbReference type="NCBI Taxonomy" id="394"/>
    <lineage>
        <taxon>Bacteria</taxon>
        <taxon>Pseudomonadati</taxon>
        <taxon>Pseudomonadota</taxon>
        <taxon>Alphaproteobacteria</taxon>
        <taxon>Hyphomicrobiales</taxon>
        <taxon>Rhizobiaceae</taxon>
        <taxon>Sinorhizobium/Ensifer group</taxon>
        <taxon>Sinorhizobium</taxon>
    </lineage>
</organism>
<sequence length="592" mass="66033">MMENNRNYFVAIALSVLILVAWQYFYVNPRMDKDRIAAEKAQQTQQVQPQQGGQQPAPGQALPGGAVPGESRDQAVAKSARVAIDTPALSGSINLTGARFDDLKLKGYHETVDPKSPVITLFSPAETADGYFTEIGYIGNDASGSVPGPQTVWTLSGGEKLTPATPVTLTYTNDKGITFARTISIDENYMFQVVDSIKNDGSAPVSLSSYGRVTRFNKPTTPSIYVLHEGFIGVAGGSLQEVGYSKIEENLPVEPGKTTGGWHGITDKYWAAAIVPPQETPFDIRFSHFTDGRPRFQSDYKGDAVTVAPGQSAEVKNLVFAGAKEVQVVDTYTTAYAIPKFEKLIDWGWFWFITQPMFKMMDFFFRLFGNFGVAILVTTIVVKLIFFPLANKQYASMANMKKVQPKMEELKKKFGDDRMGLQQAMMQLYKDEKINPLAGCWPILIQIPVFFALYKVIYITIEMRHAPFFGWIRDLSAPDPTTIVNLFGLLPFDGPAFLHLGIWPIIMGVTMFLQMRMNPTPPDPTQAMLFTWMPLVFTFMLASFPAGLVIYWAWNNTLSITQQSIIMKRQGVKIELFDNLKGLFTKRPKPAE</sequence>
<name>YIDC_SINFN</name>
<feature type="chain" id="PRO_1000187694" description="Membrane protein insertase YidC">
    <location>
        <begin position="1"/>
        <end position="592"/>
    </location>
</feature>
<feature type="transmembrane region" description="Helical" evidence="1">
    <location>
        <begin position="7"/>
        <end position="27"/>
    </location>
</feature>
<feature type="transmembrane region" description="Helical" evidence="1">
    <location>
        <begin position="367"/>
        <end position="387"/>
    </location>
</feature>
<feature type="transmembrane region" description="Helical" evidence="1">
    <location>
        <begin position="441"/>
        <end position="461"/>
    </location>
</feature>
<feature type="transmembrane region" description="Helical" evidence="1">
    <location>
        <begin position="486"/>
        <end position="506"/>
    </location>
</feature>
<feature type="transmembrane region" description="Helical" evidence="1">
    <location>
        <begin position="530"/>
        <end position="550"/>
    </location>
</feature>
<feature type="region of interest" description="Disordered" evidence="2">
    <location>
        <begin position="38"/>
        <end position="74"/>
    </location>
</feature>
<feature type="compositionally biased region" description="Low complexity" evidence="2">
    <location>
        <begin position="41"/>
        <end position="69"/>
    </location>
</feature>
<reference key="1">
    <citation type="journal article" date="2009" name="Appl. Environ. Microbiol.">
        <title>Rhizobium sp. strain NGR234 possesses a remarkable number of secretion systems.</title>
        <authorList>
            <person name="Schmeisser C."/>
            <person name="Liesegang H."/>
            <person name="Krysciak D."/>
            <person name="Bakkou N."/>
            <person name="Le Quere A."/>
            <person name="Wollherr A."/>
            <person name="Heinemeyer I."/>
            <person name="Morgenstern B."/>
            <person name="Pommerening-Roeser A."/>
            <person name="Flores M."/>
            <person name="Palacios R."/>
            <person name="Brenner S."/>
            <person name="Gottschalk G."/>
            <person name="Schmitz R.A."/>
            <person name="Broughton W.J."/>
            <person name="Perret X."/>
            <person name="Strittmatter A.W."/>
            <person name="Streit W.R."/>
        </authorList>
    </citation>
    <scope>NUCLEOTIDE SEQUENCE [LARGE SCALE GENOMIC DNA]</scope>
    <source>
        <strain>NBRC 101917 / NGR234</strain>
    </source>
</reference>
<evidence type="ECO:0000255" key="1">
    <source>
        <dbReference type="HAMAP-Rule" id="MF_01810"/>
    </source>
</evidence>
<evidence type="ECO:0000256" key="2">
    <source>
        <dbReference type="SAM" id="MobiDB-lite"/>
    </source>
</evidence>
<proteinExistence type="inferred from homology"/>
<keyword id="KW-0997">Cell inner membrane</keyword>
<keyword id="KW-1003">Cell membrane</keyword>
<keyword id="KW-0143">Chaperone</keyword>
<keyword id="KW-0472">Membrane</keyword>
<keyword id="KW-0653">Protein transport</keyword>
<keyword id="KW-1185">Reference proteome</keyword>
<keyword id="KW-0812">Transmembrane</keyword>
<keyword id="KW-1133">Transmembrane helix</keyword>
<keyword id="KW-0813">Transport</keyword>
<dbReference type="EMBL" id="CP001389">
    <property type="protein sequence ID" value="ACP23886.1"/>
    <property type="molecule type" value="Genomic_DNA"/>
</dbReference>
<dbReference type="RefSeq" id="YP_002824639.1">
    <property type="nucleotide sequence ID" value="NC_012587.1"/>
</dbReference>
<dbReference type="SMR" id="C3MF49"/>
<dbReference type="STRING" id="394.NGR_c00820"/>
<dbReference type="KEGG" id="rhi:NGR_c00820"/>
<dbReference type="PATRIC" id="fig|394.7.peg.2875"/>
<dbReference type="eggNOG" id="COG0706">
    <property type="taxonomic scope" value="Bacteria"/>
</dbReference>
<dbReference type="HOGENOM" id="CLU_016535_1_0_5"/>
<dbReference type="OrthoDB" id="9780552at2"/>
<dbReference type="Proteomes" id="UP000001054">
    <property type="component" value="Chromosome"/>
</dbReference>
<dbReference type="GO" id="GO:0005886">
    <property type="term" value="C:plasma membrane"/>
    <property type="evidence" value="ECO:0007669"/>
    <property type="project" value="UniProtKB-SubCell"/>
</dbReference>
<dbReference type="GO" id="GO:0032977">
    <property type="term" value="F:membrane insertase activity"/>
    <property type="evidence" value="ECO:0007669"/>
    <property type="project" value="InterPro"/>
</dbReference>
<dbReference type="GO" id="GO:0051205">
    <property type="term" value="P:protein insertion into membrane"/>
    <property type="evidence" value="ECO:0007669"/>
    <property type="project" value="TreeGrafter"/>
</dbReference>
<dbReference type="GO" id="GO:0015031">
    <property type="term" value="P:protein transport"/>
    <property type="evidence" value="ECO:0007669"/>
    <property type="project" value="UniProtKB-KW"/>
</dbReference>
<dbReference type="CDD" id="cd20070">
    <property type="entry name" value="5TM_YidC_Alb3"/>
    <property type="match status" value="1"/>
</dbReference>
<dbReference type="CDD" id="cd19961">
    <property type="entry name" value="EcYidC-like_peri"/>
    <property type="match status" value="1"/>
</dbReference>
<dbReference type="Gene3D" id="2.70.98.90">
    <property type="match status" value="1"/>
</dbReference>
<dbReference type="HAMAP" id="MF_01810">
    <property type="entry name" value="YidC_type1"/>
    <property type="match status" value="1"/>
</dbReference>
<dbReference type="InterPro" id="IPR019998">
    <property type="entry name" value="Membr_insert_YidC"/>
</dbReference>
<dbReference type="InterPro" id="IPR028053">
    <property type="entry name" value="Membr_insert_YidC_N"/>
</dbReference>
<dbReference type="InterPro" id="IPR001708">
    <property type="entry name" value="YidC/ALB3/OXA1/COX18"/>
</dbReference>
<dbReference type="InterPro" id="IPR028055">
    <property type="entry name" value="YidC/Oxa/ALB_C"/>
</dbReference>
<dbReference type="InterPro" id="IPR047196">
    <property type="entry name" value="YidC_ALB_C"/>
</dbReference>
<dbReference type="InterPro" id="IPR038221">
    <property type="entry name" value="YidC_periplasmic_sf"/>
</dbReference>
<dbReference type="NCBIfam" id="NF002353">
    <property type="entry name" value="PRK01318.1-4"/>
    <property type="match status" value="1"/>
</dbReference>
<dbReference type="NCBIfam" id="TIGR03593">
    <property type="entry name" value="yidC_nterm"/>
    <property type="match status" value="1"/>
</dbReference>
<dbReference type="NCBIfam" id="TIGR03592">
    <property type="entry name" value="yidC_oxa1_cterm"/>
    <property type="match status" value="1"/>
</dbReference>
<dbReference type="PANTHER" id="PTHR12428:SF65">
    <property type="entry name" value="CYTOCHROME C OXIDASE ASSEMBLY PROTEIN COX18, MITOCHONDRIAL"/>
    <property type="match status" value="1"/>
</dbReference>
<dbReference type="PANTHER" id="PTHR12428">
    <property type="entry name" value="OXA1"/>
    <property type="match status" value="1"/>
</dbReference>
<dbReference type="Pfam" id="PF02096">
    <property type="entry name" value="60KD_IMP"/>
    <property type="match status" value="1"/>
</dbReference>
<dbReference type="Pfam" id="PF14849">
    <property type="entry name" value="YidC_periplas"/>
    <property type="match status" value="1"/>
</dbReference>
<dbReference type="PRINTS" id="PR00701">
    <property type="entry name" value="60KDINNERMP"/>
</dbReference>
<dbReference type="PRINTS" id="PR01900">
    <property type="entry name" value="YIDCPROTEIN"/>
</dbReference>
<protein>
    <recommendedName>
        <fullName evidence="1">Membrane protein insertase YidC</fullName>
    </recommendedName>
    <alternativeName>
        <fullName evidence="1">Foldase YidC</fullName>
    </alternativeName>
    <alternativeName>
        <fullName evidence="1">Membrane integrase YidC</fullName>
    </alternativeName>
    <alternativeName>
        <fullName evidence="1">Membrane protein YidC</fullName>
    </alternativeName>
</protein>
<accession>C3MF49</accession>
<comment type="function">
    <text evidence="1">Required for the insertion and/or proper folding and/or complex formation of integral membrane proteins into the membrane. Involved in integration of membrane proteins that insert both dependently and independently of the Sec translocase complex, as well as at least some lipoproteins. Aids folding of multispanning membrane proteins.</text>
</comment>
<comment type="subunit">
    <text evidence="1">Interacts with the Sec translocase complex via SecD. Specifically interacts with transmembrane segments of nascent integral membrane proteins during membrane integration.</text>
</comment>
<comment type="subcellular location">
    <subcellularLocation>
        <location evidence="1">Cell inner membrane</location>
        <topology evidence="1">Multi-pass membrane protein</topology>
    </subcellularLocation>
</comment>
<comment type="similarity">
    <text evidence="1">Belongs to the OXA1/ALB3/YidC family. Type 1 subfamily.</text>
</comment>
<gene>
    <name evidence="1" type="primary">yidC</name>
    <name type="ordered locus">NGR_c00820</name>
</gene>